<sequence>MSGGVKLIAGLGNPGDQYARTRHNVGAWFLETLAQQRNQSLAKENKFHGFVAKCNDYWLLKPTTFMNESGQAVAALAHFYKIKPSEILIAHDELDFPAGDIRLKEGGGHGGHNGLRNIIQHLGSSDFYRLRIGINHPGHKDRVTPYVLSPPSENDRIAILAAIEKGLRLIPELVQGDFQKVMRELHS</sequence>
<dbReference type="EC" id="3.1.1.29" evidence="1"/>
<dbReference type="EMBL" id="CP000890">
    <property type="protein sequence ID" value="ABX78640.1"/>
    <property type="molecule type" value="Genomic_DNA"/>
</dbReference>
<dbReference type="RefSeq" id="WP_010958480.1">
    <property type="nucleotide sequence ID" value="NC_010117.1"/>
</dbReference>
<dbReference type="SMR" id="A9NAT7"/>
<dbReference type="KEGG" id="cbs:COXBURSA331_A2042"/>
<dbReference type="HOGENOM" id="CLU_062456_3_1_6"/>
<dbReference type="GO" id="GO:0005737">
    <property type="term" value="C:cytoplasm"/>
    <property type="evidence" value="ECO:0007669"/>
    <property type="project" value="UniProtKB-SubCell"/>
</dbReference>
<dbReference type="GO" id="GO:0004045">
    <property type="term" value="F:peptidyl-tRNA hydrolase activity"/>
    <property type="evidence" value="ECO:0007669"/>
    <property type="project" value="UniProtKB-UniRule"/>
</dbReference>
<dbReference type="GO" id="GO:0000049">
    <property type="term" value="F:tRNA binding"/>
    <property type="evidence" value="ECO:0007669"/>
    <property type="project" value="UniProtKB-UniRule"/>
</dbReference>
<dbReference type="GO" id="GO:0006515">
    <property type="term" value="P:protein quality control for misfolded or incompletely synthesized proteins"/>
    <property type="evidence" value="ECO:0007669"/>
    <property type="project" value="UniProtKB-UniRule"/>
</dbReference>
<dbReference type="GO" id="GO:0072344">
    <property type="term" value="P:rescue of stalled ribosome"/>
    <property type="evidence" value="ECO:0007669"/>
    <property type="project" value="UniProtKB-UniRule"/>
</dbReference>
<dbReference type="CDD" id="cd00462">
    <property type="entry name" value="PTH"/>
    <property type="match status" value="1"/>
</dbReference>
<dbReference type="FunFam" id="3.40.50.1470:FF:000001">
    <property type="entry name" value="Peptidyl-tRNA hydrolase"/>
    <property type="match status" value="1"/>
</dbReference>
<dbReference type="Gene3D" id="3.40.50.1470">
    <property type="entry name" value="Peptidyl-tRNA hydrolase"/>
    <property type="match status" value="1"/>
</dbReference>
<dbReference type="HAMAP" id="MF_00083">
    <property type="entry name" value="Pept_tRNA_hydro_bact"/>
    <property type="match status" value="1"/>
</dbReference>
<dbReference type="InterPro" id="IPR001328">
    <property type="entry name" value="Pept_tRNA_hydro"/>
</dbReference>
<dbReference type="InterPro" id="IPR018171">
    <property type="entry name" value="Pept_tRNA_hydro_CS"/>
</dbReference>
<dbReference type="InterPro" id="IPR036416">
    <property type="entry name" value="Pept_tRNA_hydro_sf"/>
</dbReference>
<dbReference type="NCBIfam" id="TIGR00447">
    <property type="entry name" value="pth"/>
    <property type="match status" value="1"/>
</dbReference>
<dbReference type="PANTHER" id="PTHR17224">
    <property type="entry name" value="PEPTIDYL-TRNA HYDROLASE"/>
    <property type="match status" value="1"/>
</dbReference>
<dbReference type="PANTHER" id="PTHR17224:SF1">
    <property type="entry name" value="PEPTIDYL-TRNA HYDROLASE"/>
    <property type="match status" value="1"/>
</dbReference>
<dbReference type="Pfam" id="PF01195">
    <property type="entry name" value="Pept_tRNA_hydro"/>
    <property type="match status" value="1"/>
</dbReference>
<dbReference type="SUPFAM" id="SSF53178">
    <property type="entry name" value="Peptidyl-tRNA hydrolase-like"/>
    <property type="match status" value="1"/>
</dbReference>
<dbReference type="PROSITE" id="PS01195">
    <property type="entry name" value="PEPT_TRNA_HYDROL_1"/>
    <property type="match status" value="1"/>
</dbReference>
<dbReference type="PROSITE" id="PS01196">
    <property type="entry name" value="PEPT_TRNA_HYDROL_2"/>
    <property type="match status" value="1"/>
</dbReference>
<gene>
    <name evidence="1" type="primary">pth</name>
    <name type="ordered locus">COXBURSA331_A2042</name>
</gene>
<name>PTH_COXBR</name>
<accession>A9NAT7</accession>
<reference key="1">
    <citation type="submission" date="2007-11" db="EMBL/GenBank/DDBJ databases">
        <title>Genome sequencing of phylogenetically and phenotypically diverse Coxiella burnetii isolates.</title>
        <authorList>
            <person name="Seshadri R."/>
            <person name="Samuel J.E."/>
        </authorList>
    </citation>
    <scope>NUCLEOTIDE SEQUENCE [LARGE SCALE GENOMIC DNA]</scope>
    <source>
        <strain>RSA 331 / Henzerling II</strain>
    </source>
</reference>
<feature type="chain" id="PRO_1000075337" description="Peptidyl-tRNA hydrolase">
    <location>
        <begin position="1"/>
        <end position="187"/>
    </location>
</feature>
<feature type="active site" description="Proton acceptor" evidence="1">
    <location>
        <position position="23"/>
    </location>
</feature>
<feature type="binding site" evidence="1">
    <location>
        <position position="18"/>
    </location>
    <ligand>
        <name>tRNA</name>
        <dbReference type="ChEBI" id="CHEBI:17843"/>
    </ligand>
</feature>
<feature type="binding site" evidence="1">
    <location>
        <position position="65"/>
    </location>
    <ligand>
        <name>tRNA</name>
        <dbReference type="ChEBI" id="CHEBI:17843"/>
    </ligand>
</feature>
<feature type="binding site" evidence="1">
    <location>
        <position position="67"/>
    </location>
    <ligand>
        <name>tRNA</name>
        <dbReference type="ChEBI" id="CHEBI:17843"/>
    </ligand>
</feature>
<feature type="binding site" evidence="1">
    <location>
        <position position="113"/>
    </location>
    <ligand>
        <name>tRNA</name>
        <dbReference type="ChEBI" id="CHEBI:17843"/>
    </ligand>
</feature>
<feature type="site" description="Discriminates between blocked and unblocked aminoacyl-tRNA" evidence="1">
    <location>
        <position position="13"/>
    </location>
</feature>
<feature type="site" description="Stabilizes the basic form of H active site to accept a proton" evidence="1">
    <location>
        <position position="92"/>
    </location>
</feature>
<proteinExistence type="inferred from homology"/>
<organism>
    <name type="scientific">Coxiella burnetii (strain RSA 331 / Henzerling II)</name>
    <dbReference type="NCBI Taxonomy" id="360115"/>
    <lineage>
        <taxon>Bacteria</taxon>
        <taxon>Pseudomonadati</taxon>
        <taxon>Pseudomonadota</taxon>
        <taxon>Gammaproteobacteria</taxon>
        <taxon>Legionellales</taxon>
        <taxon>Coxiellaceae</taxon>
        <taxon>Coxiella</taxon>
    </lineage>
</organism>
<comment type="function">
    <text evidence="1">Hydrolyzes ribosome-free peptidyl-tRNAs (with 1 or more amino acids incorporated), which drop off the ribosome during protein synthesis, or as a result of ribosome stalling.</text>
</comment>
<comment type="function">
    <text evidence="1">Catalyzes the release of premature peptidyl moieties from peptidyl-tRNA molecules trapped in stalled 50S ribosomal subunits, and thus maintains levels of free tRNAs and 50S ribosomes.</text>
</comment>
<comment type="catalytic activity">
    <reaction evidence="1">
        <text>an N-acyl-L-alpha-aminoacyl-tRNA + H2O = an N-acyl-L-amino acid + a tRNA + H(+)</text>
        <dbReference type="Rhea" id="RHEA:54448"/>
        <dbReference type="Rhea" id="RHEA-COMP:10123"/>
        <dbReference type="Rhea" id="RHEA-COMP:13883"/>
        <dbReference type="ChEBI" id="CHEBI:15377"/>
        <dbReference type="ChEBI" id="CHEBI:15378"/>
        <dbReference type="ChEBI" id="CHEBI:59874"/>
        <dbReference type="ChEBI" id="CHEBI:78442"/>
        <dbReference type="ChEBI" id="CHEBI:138191"/>
        <dbReference type="EC" id="3.1.1.29"/>
    </reaction>
</comment>
<comment type="subunit">
    <text evidence="1">Monomer.</text>
</comment>
<comment type="subcellular location">
    <subcellularLocation>
        <location evidence="1">Cytoplasm</location>
    </subcellularLocation>
</comment>
<comment type="similarity">
    <text evidence="1">Belongs to the PTH family.</text>
</comment>
<keyword id="KW-0963">Cytoplasm</keyword>
<keyword id="KW-0378">Hydrolase</keyword>
<keyword id="KW-0694">RNA-binding</keyword>
<keyword id="KW-0820">tRNA-binding</keyword>
<protein>
    <recommendedName>
        <fullName evidence="1">Peptidyl-tRNA hydrolase</fullName>
        <shortName evidence="1">Pth</shortName>
        <ecNumber evidence="1">3.1.1.29</ecNumber>
    </recommendedName>
</protein>
<evidence type="ECO:0000255" key="1">
    <source>
        <dbReference type="HAMAP-Rule" id="MF_00083"/>
    </source>
</evidence>